<accession>O49421</accession>
<reference key="1">
    <citation type="journal article" date="1999" name="Nature">
        <title>Sequence and analysis of chromosome 4 of the plant Arabidopsis thaliana.</title>
        <authorList>
            <person name="Mayer K.F.X."/>
            <person name="Schueller C."/>
            <person name="Wambutt R."/>
            <person name="Murphy G."/>
            <person name="Volckaert G."/>
            <person name="Pohl T."/>
            <person name="Duesterhoeft A."/>
            <person name="Stiekema W."/>
            <person name="Entian K.-D."/>
            <person name="Terryn N."/>
            <person name="Harris B."/>
            <person name="Ansorge W."/>
            <person name="Brandt P."/>
            <person name="Grivell L.A."/>
            <person name="Rieger M."/>
            <person name="Weichselgartner M."/>
            <person name="de Simone V."/>
            <person name="Obermaier B."/>
            <person name="Mache R."/>
            <person name="Mueller M."/>
            <person name="Kreis M."/>
            <person name="Delseny M."/>
            <person name="Puigdomenech P."/>
            <person name="Watson M."/>
            <person name="Schmidtheini T."/>
            <person name="Reichert B."/>
            <person name="Portetelle D."/>
            <person name="Perez-Alonso M."/>
            <person name="Boutry M."/>
            <person name="Bancroft I."/>
            <person name="Vos P."/>
            <person name="Hoheisel J."/>
            <person name="Zimmermann W."/>
            <person name="Wedler H."/>
            <person name="Ridley P."/>
            <person name="Langham S.-A."/>
            <person name="McCullagh B."/>
            <person name="Bilham L."/>
            <person name="Robben J."/>
            <person name="van der Schueren J."/>
            <person name="Grymonprez B."/>
            <person name="Chuang Y.-J."/>
            <person name="Vandenbussche F."/>
            <person name="Braeken M."/>
            <person name="Weltjens I."/>
            <person name="Voet M."/>
            <person name="Bastiaens I."/>
            <person name="Aert R."/>
            <person name="Defoor E."/>
            <person name="Weitzenegger T."/>
            <person name="Bothe G."/>
            <person name="Ramsperger U."/>
            <person name="Hilbert H."/>
            <person name="Braun M."/>
            <person name="Holzer E."/>
            <person name="Brandt A."/>
            <person name="Peters S."/>
            <person name="van Staveren M."/>
            <person name="Dirkse W."/>
            <person name="Mooijman P."/>
            <person name="Klein Lankhorst R."/>
            <person name="Rose M."/>
            <person name="Hauf J."/>
            <person name="Koetter P."/>
            <person name="Berneiser S."/>
            <person name="Hempel S."/>
            <person name="Feldpausch M."/>
            <person name="Lamberth S."/>
            <person name="Van den Daele H."/>
            <person name="De Keyser A."/>
            <person name="Buysshaert C."/>
            <person name="Gielen J."/>
            <person name="Villarroel R."/>
            <person name="De Clercq R."/>
            <person name="van Montagu M."/>
            <person name="Rogers J."/>
            <person name="Cronin A."/>
            <person name="Quail M.A."/>
            <person name="Bray-Allen S."/>
            <person name="Clark L."/>
            <person name="Doggett J."/>
            <person name="Hall S."/>
            <person name="Kay M."/>
            <person name="Lennard N."/>
            <person name="McLay K."/>
            <person name="Mayes R."/>
            <person name="Pettett A."/>
            <person name="Rajandream M.A."/>
            <person name="Lyne M."/>
            <person name="Benes V."/>
            <person name="Rechmann S."/>
            <person name="Borkova D."/>
            <person name="Bloecker H."/>
            <person name="Scharfe M."/>
            <person name="Grimm M."/>
            <person name="Loehnert T.-H."/>
            <person name="Dose S."/>
            <person name="de Haan M."/>
            <person name="Maarse A.C."/>
            <person name="Schaefer M."/>
            <person name="Mueller-Auer S."/>
            <person name="Gabel C."/>
            <person name="Fuchs M."/>
            <person name="Fartmann B."/>
            <person name="Granderath K."/>
            <person name="Dauner D."/>
            <person name="Herzl A."/>
            <person name="Neumann S."/>
            <person name="Argiriou A."/>
            <person name="Vitale D."/>
            <person name="Liguori R."/>
            <person name="Piravandi E."/>
            <person name="Massenet O."/>
            <person name="Quigley F."/>
            <person name="Clabauld G."/>
            <person name="Muendlein A."/>
            <person name="Felber R."/>
            <person name="Schnabl S."/>
            <person name="Hiller R."/>
            <person name="Schmidt W."/>
            <person name="Lecharny A."/>
            <person name="Aubourg S."/>
            <person name="Chefdor F."/>
            <person name="Cooke R."/>
            <person name="Berger C."/>
            <person name="Monfort A."/>
            <person name="Casacuberta E."/>
            <person name="Gibbons T."/>
            <person name="Weber N."/>
            <person name="Vandenbol M."/>
            <person name="Bargues M."/>
            <person name="Terol J."/>
            <person name="Torres A."/>
            <person name="Perez-Perez A."/>
            <person name="Purnelle B."/>
            <person name="Bent E."/>
            <person name="Johnson S."/>
            <person name="Tacon D."/>
            <person name="Jesse T."/>
            <person name="Heijnen L."/>
            <person name="Schwarz S."/>
            <person name="Scholler P."/>
            <person name="Heber S."/>
            <person name="Francs P."/>
            <person name="Bielke C."/>
            <person name="Frishman D."/>
            <person name="Haase D."/>
            <person name="Lemcke K."/>
            <person name="Mewes H.-W."/>
            <person name="Stocker S."/>
            <person name="Zaccaria P."/>
            <person name="Bevan M."/>
            <person name="Wilson R.K."/>
            <person name="de la Bastide M."/>
            <person name="Habermann K."/>
            <person name="Parnell L."/>
            <person name="Dedhia N."/>
            <person name="Gnoj L."/>
            <person name="Schutz K."/>
            <person name="Huang E."/>
            <person name="Spiegel L."/>
            <person name="Sekhon M."/>
            <person name="Murray J."/>
            <person name="Sheet P."/>
            <person name="Cordes M."/>
            <person name="Abu-Threideh J."/>
            <person name="Stoneking T."/>
            <person name="Kalicki J."/>
            <person name="Graves T."/>
            <person name="Harmon G."/>
            <person name="Edwards J."/>
            <person name="Latreille P."/>
            <person name="Courtney L."/>
            <person name="Cloud J."/>
            <person name="Abbott A."/>
            <person name="Scott K."/>
            <person name="Johnson D."/>
            <person name="Minx P."/>
            <person name="Bentley D."/>
            <person name="Fulton B."/>
            <person name="Miller N."/>
            <person name="Greco T."/>
            <person name="Kemp K."/>
            <person name="Kramer J."/>
            <person name="Fulton L."/>
            <person name="Mardis E."/>
            <person name="Dante M."/>
            <person name="Pepin K."/>
            <person name="Hillier L.W."/>
            <person name="Nelson J."/>
            <person name="Spieth J."/>
            <person name="Ryan E."/>
            <person name="Andrews S."/>
            <person name="Geisel C."/>
            <person name="Layman D."/>
            <person name="Du H."/>
            <person name="Ali J."/>
            <person name="Berghoff A."/>
            <person name="Jones K."/>
            <person name="Drone K."/>
            <person name="Cotton M."/>
            <person name="Joshu C."/>
            <person name="Antonoiu B."/>
            <person name="Zidanic M."/>
            <person name="Strong C."/>
            <person name="Sun H."/>
            <person name="Lamar B."/>
            <person name="Yordan C."/>
            <person name="Ma P."/>
            <person name="Zhong J."/>
            <person name="Preston R."/>
            <person name="Vil D."/>
            <person name="Shekher M."/>
            <person name="Matero A."/>
            <person name="Shah R."/>
            <person name="Swaby I.K."/>
            <person name="O'Shaughnessy A."/>
            <person name="Rodriguez M."/>
            <person name="Hoffman J."/>
            <person name="Till S."/>
            <person name="Granat S."/>
            <person name="Shohdy N."/>
            <person name="Hasegawa A."/>
            <person name="Hameed A."/>
            <person name="Lodhi M."/>
            <person name="Johnson A."/>
            <person name="Chen E."/>
            <person name="Marra M.A."/>
            <person name="Martienssen R."/>
            <person name="McCombie W.R."/>
        </authorList>
    </citation>
    <scope>NUCLEOTIDE SEQUENCE [LARGE SCALE GENOMIC DNA]</scope>
    <source>
        <strain>cv. Columbia</strain>
    </source>
</reference>
<reference key="2">
    <citation type="journal article" date="2017" name="Plant J.">
        <title>Araport11: a complete reannotation of the Arabidopsis thaliana reference genome.</title>
        <authorList>
            <person name="Cheng C.Y."/>
            <person name="Krishnakumar V."/>
            <person name="Chan A.P."/>
            <person name="Thibaud-Nissen F."/>
            <person name="Schobel S."/>
            <person name="Town C.D."/>
        </authorList>
    </citation>
    <scope>GENOME REANNOTATION</scope>
    <source>
        <strain>cv. Columbia</strain>
    </source>
</reference>
<feature type="chain" id="PRO_0000283505" description="F-box protein At4g19940">
    <location>
        <begin position="1"/>
        <end position="411"/>
    </location>
</feature>
<feature type="domain" description="F-box" evidence="1">
    <location>
        <begin position="29"/>
        <end position="75"/>
    </location>
</feature>
<evidence type="ECO:0000255" key="1">
    <source>
        <dbReference type="PROSITE-ProRule" id="PRU00080"/>
    </source>
</evidence>
<name>FB238_ARATH</name>
<sequence length="411" mass="47309">MAFSFDLAVILQRERRRTKRRRRDLCKSRQPIPEIPFDLVIEILTRLPAKSLMRFKSVSKLWSSLICSRNFTNRLLKLSSPPRLFMCLSSSDNSHLKTVLLSLSSPPDSDITMSSSVIDQDLTMPGMKGYQISHVFRGLMCLVKKSSAQIYNTTTRQLVVLPDIEESTILAEEHKSKKIMYHIGHDPVYDQYKVVCIVSRASDEVEEYTFLSEHWVLLLEGEGSRRWRKISCKYPPHVPLGQGLTLSGRMHYLAWVRVSDNRVLVIFDTHSEEFSMLQVPGDIFWKYNGLLEYGGKIAILNYTKVDIEGVMELWVVEDEEKNLWSSKILVVNPLQLQMVNSIISLTVLGTTRNGEVILVPGPEDKTVFNILLYDLQKNHIRKIEIKGGPDRYLNNIWEVVGMDDVENLMYL</sequence>
<dbReference type="EMBL" id="AL021637">
    <property type="protein sequence ID" value="CAA16602.1"/>
    <property type="molecule type" value="Genomic_DNA"/>
</dbReference>
<dbReference type="EMBL" id="AL161551">
    <property type="protein sequence ID" value="CAB78994.1"/>
    <property type="molecule type" value="Genomic_DNA"/>
</dbReference>
<dbReference type="EMBL" id="CP002687">
    <property type="protein sequence ID" value="AEE84249.1"/>
    <property type="molecule type" value="Genomic_DNA"/>
</dbReference>
<dbReference type="PIR" id="T04878">
    <property type="entry name" value="T04878"/>
</dbReference>
<dbReference type="RefSeq" id="NP_193727.1">
    <property type="nucleotide sequence ID" value="NM_118112.2"/>
</dbReference>
<dbReference type="BioGRID" id="13031">
    <property type="interactions" value="10"/>
</dbReference>
<dbReference type="FunCoup" id="O49421">
    <property type="interactions" value="7"/>
</dbReference>
<dbReference type="PaxDb" id="3702-AT4G19940.1"/>
<dbReference type="ProteomicsDB" id="222531"/>
<dbReference type="DNASU" id="827738"/>
<dbReference type="EnsemblPlants" id="AT4G19940.1">
    <property type="protein sequence ID" value="AT4G19940.1"/>
    <property type="gene ID" value="AT4G19940"/>
</dbReference>
<dbReference type="GeneID" id="827738"/>
<dbReference type="Gramene" id="AT4G19940.1">
    <property type="protein sequence ID" value="AT4G19940.1"/>
    <property type="gene ID" value="AT4G19940"/>
</dbReference>
<dbReference type="KEGG" id="ath:AT4G19940"/>
<dbReference type="Araport" id="AT4G19940"/>
<dbReference type="TAIR" id="AT4G19940"/>
<dbReference type="HOGENOM" id="CLU_027176_8_2_1"/>
<dbReference type="InParanoid" id="O49421"/>
<dbReference type="OMA" id="KMHIVHN"/>
<dbReference type="PhylomeDB" id="O49421"/>
<dbReference type="PRO" id="PR:O49421"/>
<dbReference type="Proteomes" id="UP000006548">
    <property type="component" value="Chromosome 4"/>
</dbReference>
<dbReference type="ExpressionAtlas" id="O49421">
    <property type="expression patterns" value="baseline and differential"/>
</dbReference>
<dbReference type="CDD" id="cd22157">
    <property type="entry name" value="F-box_AtFBW1-like"/>
    <property type="match status" value="1"/>
</dbReference>
<dbReference type="Gene3D" id="1.20.1280.50">
    <property type="match status" value="1"/>
</dbReference>
<dbReference type="InterPro" id="IPR013187">
    <property type="entry name" value="F-box-assoc_dom_typ3"/>
</dbReference>
<dbReference type="InterPro" id="IPR017451">
    <property type="entry name" value="F-box-assoc_interact_dom"/>
</dbReference>
<dbReference type="InterPro" id="IPR036047">
    <property type="entry name" value="F-box-like_dom_sf"/>
</dbReference>
<dbReference type="InterPro" id="IPR001810">
    <property type="entry name" value="F-box_dom"/>
</dbReference>
<dbReference type="NCBIfam" id="TIGR01640">
    <property type="entry name" value="F_box_assoc_1"/>
    <property type="match status" value="1"/>
</dbReference>
<dbReference type="PANTHER" id="PTHR31111">
    <property type="entry name" value="BNAA05G37150D PROTEIN-RELATED"/>
    <property type="match status" value="1"/>
</dbReference>
<dbReference type="PANTHER" id="PTHR31111:SF17">
    <property type="entry name" value="F-BOX DOMAIN-CONTAINING PROTEIN"/>
    <property type="match status" value="1"/>
</dbReference>
<dbReference type="Pfam" id="PF00646">
    <property type="entry name" value="F-box"/>
    <property type="match status" value="1"/>
</dbReference>
<dbReference type="Pfam" id="PF08268">
    <property type="entry name" value="FBA_3"/>
    <property type="match status" value="1"/>
</dbReference>
<dbReference type="SMART" id="SM00256">
    <property type="entry name" value="FBOX"/>
    <property type="match status" value="1"/>
</dbReference>
<dbReference type="SUPFAM" id="SSF81383">
    <property type="entry name" value="F-box domain"/>
    <property type="match status" value="1"/>
</dbReference>
<dbReference type="PROSITE" id="PS50181">
    <property type="entry name" value="FBOX"/>
    <property type="match status" value="1"/>
</dbReference>
<protein>
    <recommendedName>
        <fullName>F-box protein At4g19940</fullName>
    </recommendedName>
</protein>
<organism>
    <name type="scientific">Arabidopsis thaliana</name>
    <name type="common">Mouse-ear cress</name>
    <dbReference type="NCBI Taxonomy" id="3702"/>
    <lineage>
        <taxon>Eukaryota</taxon>
        <taxon>Viridiplantae</taxon>
        <taxon>Streptophyta</taxon>
        <taxon>Embryophyta</taxon>
        <taxon>Tracheophyta</taxon>
        <taxon>Spermatophyta</taxon>
        <taxon>Magnoliopsida</taxon>
        <taxon>eudicotyledons</taxon>
        <taxon>Gunneridae</taxon>
        <taxon>Pentapetalae</taxon>
        <taxon>rosids</taxon>
        <taxon>malvids</taxon>
        <taxon>Brassicales</taxon>
        <taxon>Brassicaceae</taxon>
        <taxon>Camelineae</taxon>
        <taxon>Arabidopsis</taxon>
    </lineage>
</organism>
<gene>
    <name type="ordered locus">At4g19940</name>
    <name type="ORF">F18F4.40</name>
</gene>
<keyword id="KW-1185">Reference proteome</keyword>
<proteinExistence type="predicted"/>